<proteinExistence type="inferred from homology"/>
<dbReference type="EMBL" id="CR925677">
    <property type="protein sequence ID" value="CAI28070.1"/>
    <property type="status" value="ALT_INIT"/>
    <property type="molecule type" value="Genomic_DNA"/>
</dbReference>
<dbReference type="RefSeq" id="WP_011155278.1">
    <property type="nucleotide sequence ID" value="NC_006831.1"/>
</dbReference>
<dbReference type="SMR" id="Q5FFV1"/>
<dbReference type="GeneID" id="33058413"/>
<dbReference type="KEGG" id="erg:ERGA_CDS_06180"/>
<dbReference type="HOGENOM" id="CLU_093315_2_2_5"/>
<dbReference type="OrthoDB" id="9807419at2"/>
<dbReference type="Proteomes" id="UP000000533">
    <property type="component" value="Chromosome"/>
</dbReference>
<dbReference type="GO" id="GO:1990904">
    <property type="term" value="C:ribonucleoprotein complex"/>
    <property type="evidence" value="ECO:0007669"/>
    <property type="project" value="UniProtKB-KW"/>
</dbReference>
<dbReference type="GO" id="GO:0005840">
    <property type="term" value="C:ribosome"/>
    <property type="evidence" value="ECO:0007669"/>
    <property type="project" value="UniProtKB-KW"/>
</dbReference>
<dbReference type="GO" id="GO:0019843">
    <property type="term" value="F:rRNA binding"/>
    <property type="evidence" value="ECO:0007669"/>
    <property type="project" value="UniProtKB-UniRule"/>
</dbReference>
<dbReference type="GO" id="GO:0003735">
    <property type="term" value="F:structural constituent of ribosome"/>
    <property type="evidence" value="ECO:0007669"/>
    <property type="project" value="InterPro"/>
</dbReference>
<dbReference type="GO" id="GO:0006412">
    <property type="term" value="P:translation"/>
    <property type="evidence" value="ECO:0007669"/>
    <property type="project" value="UniProtKB-UniRule"/>
</dbReference>
<dbReference type="CDD" id="cd06089">
    <property type="entry name" value="KOW_RPL26"/>
    <property type="match status" value="1"/>
</dbReference>
<dbReference type="Gene3D" id="2.30.30.30">
    <property type="match status" value="1"/>
</dbReference>
<dbReference type="HAMAP" id="MF_01326_B">
    <property type="entry name" value="Ribosomal_uL24_B"/>
    <property type="match status" value="1"/>
</dbReference>
<dbReference type="InterPro" id="IPR005824">
    <property type="entry name" value="KOW"/>
</dbReference>
<dbReference type="InterPro" id="IPR014722">
    <property type="entry name" value="Rib_uL2_dom2"/>
</dbReference>
<dbReference type="InterPro" id="IPR003256">
    <property type="entry name" value="Ribosomal_uL24"/>
</dbReference>
<dbReference type="InterPro" id="IPR005825">
    <property type="entry name" value="Ribosomal_uL24_CS"/>
</dbReference>
<dbReference type="InterPro" id="IPR041988">
    <property type="entry name" value="Ribosomal_uL24_KOW"/>
</dbReference>
<dbReference type="InterPro" id="IPR008991">
    <property type="entry name" value="Translation_prot_SH3-like_sf"/>
</dbReference>
<dbReference type="NCBIfam" id="TIGR01079">
    <property type="entry name" value="rplX_bact"/>
    <property type="match status" value="1"/>
</dbReference>
<dbReference type="PANTHER" id="PTHR12903">
    <property type="entry name" value="MITOCHONDRIAL RIBOSOMAL PROTEIN L24"/>
    <property type="match status" value="1"/>
</dbReference>
<dbReference type="Pfam" id="PF00467">
    <property type="entry name" value="KOW"/>
    <property type="match status" value="1"/>
</dbReference>
<dbReference type="Pfam" id="PF17136">
    <property type="entry name" value="ribosomal_L24"/>
    <property type="match status" value="1"/>
</dbReference>
<dbReference type="SMART" id="SM00739">
    <property type="entry name" value="KOW"/>
    <property type="match status" value="1"/>
</dbReference>
<dbReference type="SUPFAM" id="SSF50104">
    <property type="entry name" value="Translation proteins SH3-like domain"/>
    <property type="match status" value="1"/>
</dbReference>
<dbReference type="PROSITE" id="PS01108">
    <property type="entry name" value="RIBOSOMAL_L24"/>
    <property type="match status" value="1"/>
</dbReference>
<keyword id="KW-0687">Ribonucleoprotein</keyword>
<keyword id="KW-0689">Ribosomal protein</keyword>
<keyword id="KW-0694">RNA-binding</keyword>
<keyword id="KW-0699">rRNA-binding</keyword>
<name>RL24_EHRRG</name>
<comment type="function">
    <text evidence="1">One of two assembly initiator proteins, it binds directly to the 5'-end of the 23S rRNA, where it nucleates assembly of the 50S subunit.</text>
</comment>
<comment type="function">
    <text evidence="1">One of the proteins that surrounds the polypeptide exit tunnel on the outside of the subunit.</text>
</comment>
<comment type="subunit">
    <text evidence="1">Part of the 50S ribosomal subunit.</text>
</comment>
<comment type="similarity">
    <text evidence="1">Belongs to the universal ribosomal protein uL24 family.</text>
</comment>
<comment type="sequence caution" evidence="2">
    <conflict type="erroneous initiation">
        <sequence resource="EMBL-CDS" id="CAI28070"/>
    </conflict>
</comment>
<accession>Q5FFV1</accession>
<organism>
    <name type="scientific">Ehrlichia ruminantium (strain Gardel)</name>
    <dbReference type="NCBI Taxonomy" id="302409"/>
    <lineage>
        <taxon>Bacteria</taxon>
        <taxon>Pseudomonadati</taxon>
        <taxon>Pseudomonadota</taxon>
        <taxon>Alphaproteobacteria</taxon>
        <taxon>Rickettsiales</taxon>
        <taxon>Anaplasmataceae</taxon>
        <taxon>Ehrlichia</taxon>
    </lineage>
</organism>
<gene>
    <name evidence="1" type="primary">rplX</name>
    <name type="ordered locus">ERGA_CDS_06180</name>
</gene>
<reference key="1">
    <citation type="journal article" date="2006" name="J. Bacteriol.">
        <title>Comparative genomic analysis of three strains of Ehrlichia ruminantium reveals an active process of genome size plasticity.</title>
        <authorList>
            <person name="Frutos R."/>
            <person name="Viari A."/>
            <person name="Ferraz C."/>
            <person name="Morgat A."/>
            <person name="Eychenie S."/>
            <person name="Kandassamy Y."/>
            <person name="Chantal I."/>
            <person name="Bensaid A."/>
            <person name="Coissac E."/>
            <person name="Vachiery N."/>
            <person name="Demaille J."/>
            <person name="Martinez D."/>
        </authorList>
    </citation>
    <scope>NUCLEOTIDE SEQUENCE [LARGE SCALE GENOMIC DNA]</scope>
    <source>
        <strain>Gardel</strain>
    </source>
</reference>
<protein>
    <recommendedName>
        <fullName evidence="1">Large ribosomal subunit protein uL24</fullName>
    </recommendedName>
    <alternativeName>
        <fullName evidence="2">50S ribosomal protein L24</fullName>
    </alternativeName>
</protein>
<evidence type="ECO:0000255" key="1">
    <source>
        <dbReference type="HAMAP-Rule" id="MF_01326"/>
    </source>
</evidence>
<evidence type="ECO:0000305" key="2"/>
<sequence>MGMKIIAGDDVLVVSGKDKGKMGKVIKVLKKKSCGKDLTFAIVSGINICKKSVKATQNSDGGIISVERPINISNIALVDSVLGIRTKVGYKFIDDKKVRFMKSSGKVIE</sequence>
<feature type="chain" id="PRO_0000241597" description="Large ribosomal subunit protein uL24">
    <location>
        <begin position="1"/>
        <end position="109"/>
    </location>
</feature>